<organism>
    <name type="scientific">Homo sapiens</name>
    <name type="common">Human</name>
    <dbReference type="NCBI Taxonomy" id="9606"/>
    <lineage>
        <taxon>Eukaryota</taxon>
        <taxon>Metazoa</taxon>
        <taxon>Chordata</taxon>
        <taxon>Craniata</taxon>
        <taxon>Vertebrata</taxon>
        <taxon>Euteleostomi</taxon>
        <taxon>Mammalia</taxon>
        <taxon>Eutheria</taxon>
        <taxon>Euarchontoglires</taxon>
        <taxon>Primates</taxon>
        <taxon>Haplorrhini</taxon>
        <taxon>Catarrhini</taxon>
        <taxon>Hominidae</taxon>
        <taxon>Homo</taxon>
    </lineage>
</organism>
<accession>Q76KX8</accession>
<accession>Q76KX9</accession>
<keyword id="KW-0025">Alternative splicing</keyword>
<keyword id="KW-0238">DNA-binding</keyword>
<keyword id="KW-0479">Metal-binding</keyword>
<keyword id="KW-0539">Nucleus</keyword>
<keyword id="KW-1185">Reference proteome</keyword>
<keyword id="KW-0677">Repeat</keyword>
<keyword id="KW-0804">Transcription</keyword>
<keyword id="KW-0805">Transcription regulation</keyword>
<keyword id="KW-0862">Zinc</keyword>
<keyword id="KW-0863">Zinc-finger</keyword>
<reference key="1">
    <citation type="submission" date="2002-06" db="EMBL/GenBank/DDBJ databases">
        <title>Identification of a novel Kruppel-like zinc finger protein.</title>
        <authorList>
            <person name="Maegawa S."/>
            <person name="Shiraishi M."/>
            <person name="Otsuka S."/>
            <person name="Meguro M."/>
            <person name="Mitsuya K."/>
            <person name="Nanba E."/>
            <person name="Oshimura M."/>
        </authorList>
    </citation>
    <scope>NUCLEOTIDE SEQUENCE [MRNA] (ISOFORMS 1 AND 2)</scope>
</reference>
<reference key="2">
    <citation type="journal article" date="2004" name="Nature">
        <title>The DNA sequence and biology of human chromosome 19.</title>
        <authorList>
            <person name="Grimwood J."/>
            <person name="Gordon L.A."/>
            <person name="Olsen A.S."/>
            <person name="Terry A."/>
            <person name="Schmutz J."/>
            <person name="Lamerdin J.E."/>
            <person name="Hellsten U."/>
            <person name="Goodstein D."/>
            <person name="Couronne O."/>
            <person name="Tran-Gyamfi M."/>
            <person name="Aerts A."/>
            <person name="Altherr M."/>
            <person name="Ashworth L."/>
            <person name="Bajorek E."/>
            <person name="Black S."/>
            <person name="Branscomb E."/>
            <person name="Caenepeel S."/>
            <person name="Carrano A.V."/>
            <person name="Caoile C."/>
            <person name="Chan Y.M."/>
            <person name="Christensen M."/>
            <person name="Cleland C.A."/>
            <person name="Copeland A."/>
            <person name="Dalin E."/>
            <person name="Dehal P."/>
            <person name="Denys M."/>
            <person name="Detter J.C."/>
            <person name="Escobar J."/>
            <person name="Flowers D."/>
            <person name="Fotopulos D."/>
            <person name="Garcia C."/>
            <person name="Georgescu A.M."/>
            <person name="Glavina T."/>
            <person name="Gomez M."/>
            <person name="Gonzales E."/>
            <person name="Groza M."/>
            <person name="Hammon N."/>
            <person name="Hawkins T."/>
            <person name="Haydu L."/>
            <person name="Ho I."/>
            <person name="Huang W."/>
            <person name="Israni S."/>
            <person name="Jett J."/>
            <person name="Kadner K."/>
            <person name="Kimball H."/>
            <person name="Kobayashi A."/>
            <person name="Larionov V."/>
            <person name="Leem S.-H."/>
            <person name="Lopez F."/>
            <person name="Lou Y."/>
            <person name="Lowry S."/>
            <person name="Malfatti S."/>
            <person name="Martinez D."/>
            <person name="McCready P.M."/>
            <person name="Medina C."/>
            <person name="Morgan J."/>
            <person name="Nelson K."/>
            <person name="Nolan M."/>
            <person name="Ovcharenko I."/>
            <person name="Pitluck S."/>
            <person name="Pollard M."/>
            <person name="Popkie A.P."/>
            <person name="Predki P."/>
            <person name="Quan G."/>
            <person name="Ramirez L."/>
            <person name="Rash S."/>
            <person name="Retterer J."/>
            <person name="Rodriguez A."/>
            <person name="Rogers S."/>
            <person name="Salamov A."/>
            <person name="Salazar A."/>
            <person name="She X."/>
            <person name="Smith D."/>
            <person name="Slezak T."/>
            <person name="Solovyev V."/>
            <person name="Thayer N."/>
            <person name="Tice H."/>
            <person name="Tsai M."/>
            <person name="Ustaszewska A."/>
            <person name="Vo N."/>
            <person name="Wagner M."/>
            <person name="Wheeler J."/>
            <person name="Wu K."/>
            <person name="Xie G."/>
            <person name="Yang J."/>
            <person name="Dubchak I."/>
            <person name="Furey T.S."/>
            <person name="DeJong P."/>
            <person name="Dickson M."/>
            <person name="Gordon D."/>
            <person name="Eichler E.E."/>
            <person name="Pennacchio L.A."/>
            <person name="Richardson P."/>
            <person name="Stubbs L."/>
            <person name="Rokhsar D.S."/>
            <person name="Myers R.M."/>
            <person name="Rubin E.M."/>
            <person name="Lucas S.M."/>
        </authorList>
    </citation>
    <scope>NUCLEOTIDE SEQUENCE [LARGE SCALE GENOMIC DNA]</scope>
</reference>
<name>ZN534_HUMAN</name>
<proteinExistence type="evidence at protein level"/>
<dbReference type="EMBL" id="AB086839">
    <property type="protein sequence ID" value="BAD13515.1"/>
    <property type="molecule type" value="mRNA"/>
</dbReference>
<dbReference type="EMBL" id="AB086840">
    <property type="protein sequence ID" value="BAD13516.1"/>
    <property type="molecule type" value="mRNA"/>
</dbReference>
<dbReference type="EMBL" id="AC010332">
    <property type="status" value="NOT_ANNOTATED_CDS"/>
    <property type="molecule type" value="Genomic_DNA"/>
</dbReference>
<dbReference type="CCDS" id="CCDS46165.1">
    <molecule id="Q76KX8-1"/>
</dbReference>
<dbReference type="CCDS" id="CCDS46166.1">
    <molecule id="Q76KX8-2"/>
</dbReference>
<dbReference type="RefSeq" id="NP_001137410.1">
    <molecule id="Q76KX8-2"/>
    <property type="nucleotide sequence ID" value="NM_001143938.3"/>
</dbReference>
<dbReference type="RefSeq" id="NP_001137411.1">
    <molecule id="Q76KX8-1"/>
    <property type="nucleotide sequence ID" value="NM_001143939.3"/>
</dbReference>
<dbReference type="SMR" id="Q76KX8"/>
<dbReference type="BioGRID" id="127069">
    <property type="interactions" value="3"/>
</dbReference>
<dbReference type="FunCoup" id="Q76KX8">
    <property type="interactions" value="1"/>
</dbReference>
<dbReference type="IntAct" id="Q76KX8">
    <property type="interactions" value="9"/>
</dbReference>
<dbReference type="STRING" id="9606.ENSP00000327538"/>
<dbReference type="iPTMnet" id="Q76KX8"/>
<dbReference type="PhosphoSitePlus" id="Q76KX8"/>
<dbReference type="BioMuta" id="ZNF534"/>
<dbReference type="DMDM" id="74749834"/>
<dbReference type="jPOST" id="Q76KX8"/>
<dbReference type="MassIVE" id="Q76KX8"/>
<dbReference type="PaxDb" id="9606-ENSP00000327538"/>
<dbReference type="PeptideAtlas" id="Q76KX8"/>
<dbReference type="ProteomicsDB" id="68678">
    <molecule id="Q76KX8-1"/>
</dbReference>
<dbReference type="ProteomicsDB" id="68679">
    <molecule id="Q76KX8-2"/>
</dbReference>
<dbReference type="Antibodypedia" id="32599">
    <property type="antibodies" value="16 antibodies from 7 providers"/>
</dbReference>
<dbReference type="DNASU" id="147658"/>
<dbReference type="Ensembl" id="ENST00000332323.10">
    <molecule id="Q76KX8-1"/>
    <property type="protein sequence ID" value="ENSP00000327538.6"/>
    <property type="gene ID" value="ENSG00000198633.11"/>
</dbReference>
<dbReference type="Ensembl" id="ENST00000433050.6">
    <molecule id="Q76KX8-2"/>
    <property type="protein sequence ID" value="ENSP00000391358.1"/>
    <property type="gene ID" value="ENSG00000198633.11"/>
</dbReference>
<dbReference type="GeneID" id="147658"/>
<dbReference type="KEGG" id="hsa:147658"/>
<dbReference type="MANE-Select" id="ENST00000433050.6">
    <molecule id="Q76KX8-2"/>
    <property type="protein sequence ID" value="ENSP00000391358.1"/>
    <property type="RefSeq nucleotide sequence ID" value="NM_001143938.3"/>
    <property type="RefSeq protein sequence ID" value="NP_001137410.1"/>
</dbReference>
<dbReference type="UCSC" id="uc002pzk.4">
    <molecule id="Q76KX8-1"/>
    <property type="organism name" value="human"/>
</dbReference>
<dbReference type="AGR" id="HGNC:26337"/>
<dbReference type="CTD" id="147658"/>
<dbReference type="DisGeNET" id="147658"/>
<dbReference type="GeneCards" id="ZNF534"/>
<dbReference type="HGNC" id="HGNC:26337">
    <property type="gene designation" value="ZNF534"/>
</dbReference>
<dbReference type="HPA" id="ENSG00000198633">
    <property type="expression patterns" value="Tissue enhanced (brain, testis)"/>
</dbReference>
<dbReference type="MalaCards" id="ZNF534"/>
<dbReference type="neXtProt" id="NX_Q76KX8"/>
<dbReference type="OpenTargets" id="ENSG00000198633"/>
<dbReference type="PharmGKB" id="PA134911920"/>
<dbReference type="VEuPathDB" id="HostDB:ENSG00000198633"/>
<dbReference type="eggNOG" id="KOG1721">
    <property type="taxonomic scope" value="Eukaryota"/>
</dbReference>
<dbReference type="GeneTree" id="ENSGT00940000165725"/>
<dbReference type="HOGENOM" id="CLU_002678_44_5_1"/>
<dbReference type="InParanoid" id="Q76KX8"/>
<dbReference type="OMA" id="KTHICNN"/>
<dbReference type="OrthoDB" id="6020621at2759"/>
<dbReference type="PAN-GO" id="Q76KX8">
    <property type="GO annotations" value="4 GO annotations based on evolutionary models"/>
</dbReference>
<dbReference type="PhylomeDB" id="Q76KX8"/>
<dbReference type="TreeFam" id="TF341892"/>
<dbReference type="PathwayCommons" id="Q76KX8"/>
<dbReference type="Reactome" id="R-HSA-9843940">
    <property type="pathway name" value="Regulation of endogenous retroelements by KRAB-ZFP proteins"/>
</dbReference>
<dbReference type="SignaLink" id="Q76KX8"/>
<dbReference type="BioGRID-ORCS" id="147658">
    <property type="hits" value="6 hits in 1168 CRISPR screens"/>
</dbReference>
<dbReference type="ChiTaRS" id="ZNF534">
    <property type="organism name" value="human"/>
</dbReference>
<dbReference type="GenomeRNAi" id="147658"/>
<dbReference type="Pharos" id="Q76KX8">
    <property type="development level" value="Tdark"/>
</dbReference>
<dbReference type="PRO" id="PR:Q76KX8"/>
<dbReference type="Proteomes" id="UP000005640">
    <property type="component" value="Chromosome 19"/>
</dbReference>
<dbReference type="RNAct" id="Q76KX8">
    <property type="molecule type" value="protein"/>
</dbReference>
<dbReference type="Bgee" id="ENSG00000198633">
    <property type="expression patterns" value="Expressed in primordial germ cell in gonad and 82 other cell types or tissues"/>
</dbReference>
<dbReference type="ExpressionAtlas" id="Q76KX8">
    <property type="expression patterns" value="baseline and differential"/>
</dbReference>
<dbReference type="GO" id="GO:0005634">
    <property type="term" value="C:nucleus"/>
    <property type="evidence" value="ECO:0000318"/>
    <property type="project" value="GO_Central"/>
</dbReference>
<dbReference type="GO" id="GO:0000981">
    <property type="term" value="F:DNA-binding transcription factor activity, RNA polymerase II-specific"/>
    <property type="evidence" value="ECO:0000318"/>
    <property type="project" value="GO_Central"/>
</dbReference>
<dbReference type="GO" id="GO:0000978">
    <property type="term" value="F:RNA polymerase II cis-regulatory region sequence-specific DNA binding"/>
    <property type="evidence" value="ECO:0000318"/>
    <property type="project" value="GO_Central"/>
</dbReference>
<dbReference type="GO" id="GO:0008270">
    <property type="term" value="F:zinc ion binding"/>
    <property type="evidence" value="ECO:0007669"/>
    <property type="project" value="UniProtKB-KW"/>
</dbReference>
<dbReference type="GO" id="GO:0006357">
    <property type="term" value="P:regulation of transcription by RNA polymerase II"/>
    <property type="evidence" value="ECO:0000318"/>
    <property type="project" value="GO_Central"/>
</dbReference>
<dbReference type="CDD" id="cd07765">
    <property type="entry name" value="KRAB_A-box"/>
    <property type="match status" value="1"/>
</dbReference>
<dbReference type="FunFam" id="3.30.160.60:FF:004137">
    <property type="match status" value="1"/>
</dbReference>
<dbReference type="FunFam" id="3.30.160.60:FF:002881">
    <property type="entry name" value="Reduced expression 2"/>
    <property type="match status" value="1"/>
</dbReference>
<dbReference type="FunFam" id="3.30.160.60:FF:000056">
    <property type="entry name" value="Zinc finger and SCAN domain-containing 20"/>
    <property type="match status" value="1"/>
</dbReference>
<dbReference type="FunFam" id="3.30.160.60:FF:002343">
    <property type="entry name" value="Zinc finger protein 33A"/>
    <property type="match status" value="1"/>
</dbReference>
<dbReference type="FunFam" id="3.30.160.60:FF:000133">
    <property type="entry name" value="Zinc finger protein 347"/>
    <property type="match status" value="3"/>
</dbReference>
<dbReference type="FunFam" id="3.30.160.60:FF:002402">
    <property type="entry name" value="Zinc finger protein 347"/>
    <property type="match status" value="1"/>
</dbReference>
<dbReference type="FunFam" id="3.30.160.60:FF:000016">
    <property type="entry name" value="zinc finger protein 37 homolog"/>
    <property type="match status" value="4"/>
</dbReference>
<dbReference type="FunFam" id="3.30.160.60:FF:002254">
    <property type="entry name" value="Zinc finger protein 540"/>
    <property type="match status" value="2"/>
</dbReference>
<dbReference type="FunFam" id="3.30.160.60:FF:000052">
    <property type="entry name" value="zinc finger protein 546 isoform X1"/>
    <property type="match status" value="1"/>
</dbReference>
<dbReference type="FunFam" id="3.30.160.60:FF:000454">
    <property type="entry name" value="Zinc finger protein 624"/>
    <property type="match status" value="1"/>
</dbReference>
<dbReference type="FunFam" id="3.30.160.60:FF:000416">
    <property type="entry name" value="zinc finger protein 879 isoform X1"/>
    <property type="match status" value="1"/>
</dbReference>
<dbReference type="FunFam" id="3.30.160.60:FF:001630">
    <property type="entry name" value="Zinc finger protein 888"/>
    <property type="match status" value="1"/>
</dbReference>
<dbReference type="Gene3D" id="6.10.140.140">
    <property type="match status" value="1"/>
</dbReference>
<dbReference type="Gene3D" id="3.30.160.60">
    <property type="entry name" value="Classic Zinc Finger"/>
    <property type="match status" value="17"/>
</dbReference>
<dbReference type="InterPro" id="IPR050589">
    <property type="entry name" value="Ikaros_C2H2-ZF"/>
</dbReference>
<dbReference type="InterPro" id="IPR001909">
    <property type="entry name" value="KRAB"/>
</dbReference>
<dbReference type="InterPro" id="IPR036051">
    <property type="entry name" value="KRAB_dom_sf"/>
</dbReference>
<dbReference type="InterPro" id="IPR036236">
    <property type="entry name" value="Znf_C2H2_sf"/>
</dbReference>
<dbReference type="InterPro" id="IPR013087">
    <property type="entry name" value="Znf_C2H2_type"/>
</dbReference>
<dbReference type="PANTHER" id="PTHR24404">
    <property type="entry name" value="ZINC FINGER PROTEIN"/>
    <property type="match status" value="1"/>
</dbReference>
<dbReference type="PANTHER" id="PTHR24404:SF100">
    <property type="entry name" value="ZINC FINGER PROTEIN 501"/>
    <property type="match status" value="1"/>
</dbReference>
<dbReference type="Pfam" id="PF01352">
    <property type="entry name" value="KRAB"/>
    <property type="match status" value="1"/>
</dbReference>
<dbReference type="Pfam" id="PF00096">
    <property type="entry name" value="zf-C2H2"/>
    <property type="match status" value="13"/>
</dbReference>
<dbReference type="SMART" id="SM00349">
    <property type="entry name" value="KRAB"/>
    <property type="match status" value="1"/>
</dbReference>
<dbReference type="SMART" id="SM00355">
    <property type="entry name" value="ZnF_C2H2"/>
    <property type="match status" value="16"/>
</dbReference>
<dbReference type="SUPFAM" id="SSF57667">
    <property type="entry name" value="beta-beta-alpha zinc fingers"/>
    <property type="match status" value="9"/>
</dbReference>
<dbReference type="SUPFAM" id="SSF109640">
    <property type="entry name" value="KRAB domain (Kruppel-associated box)"/>
    <property type="match status" value="1"/>
</dbReference>
<dbReference type="PROSITE" id="PS50805">
    <property type="entry name" value="KRAB"/>
    <property type="match status" value="1"/>
</dbReference>
<dbReference type="PROSITE" id="PS00028">
    <property type="entry name" value="ZINC_FINGER_C2H2_1"/>
    <property type="match status" value="14"/>
</dbReference>
<dbReference type="PROSITE" id="PS50157">
    <property type="entry name" value="ZINC_FINGER_C2H2_2"/>
    <property type="match status" value="17"/>
</dbReference>
<protein>
    <recommendedName>
        <fullName>Zinc finger protein 534</fullName>
    </recommendedName>
    <alternativeName>
        <fullName>KRAB domain only protein 3</fullName>
    </alternativeName>
</protein>
<gene>
    <name type="primary">ZNF534</name>
    <name type="synonym">KRBO3</name>
</gene>
<sequence length="674" mass="77167">MALTQGQLSFSDVAIEFSQEEWKCLDPGQKALYRDVMLENYRNLVSLGEDNVRPEACICSGICLPDLSVTSMLEQKRDPWTLQSEVKIINNPDGRECIKGVNTEKSSKLGSSAGNKSLKNQHGLTLQLHLTEWQPFQAVRNIYGCKHVEKSISDNSSVSPVQISFFSVKTHIFNNYRNDFLFSTLLPQEQKVHIREKPYGCNEHGKVFRVSSSLTNRQVIHIADKTYKCSDCGEIFSSNSNFAQHQRIHTGEKPYKYNECGKVFNQNSHLAQHQKIHTGQKPYNNKECGKVFSHHAYLAQHRKIHTGEKPYKCSECGKAFSVCSSLTAHLVIHTGEKPYDCKECGKVFRHKSSLTTHQTVHTGERPYKCNECGKGFSRIAFLARHRKVHTGEKPYKCNECGKVFIGNSRLARHRKIHTGGRRYKCNECGKAFRTCSDLTAHLLIHTGEKPYECIDCGKVFRHKSSLTYHCRIHTGEKPYKCNECGKVFSQNSNLQRHRKIHTGEKLYKCNECGKVFRQNSHLAQHRDIHTGEKPYSCNECGKVFRRNSHLVRHRNVHTGEKPYSCNECGKVFSRNSHLARHRNIHTGEKPHSCNECGKVFSRNSHLARHRKIHTGEKLYKCNECSKVFSRNSRLAQHRNIHTGVKPYSCNECGKVFSKNSILVQHCSIHTREKP</sequence>
<evidence type="ECO:0000250" key="1"/>
<evidence type="ECO:0000255" key="2">
    <source>
        <dbReference type="PROSITE-ProRule" id="PRU00042"/>
    </source>
</evidence>
<evidence type="ECO:0000255" key="3">
    <source>
        <dbReference type="PROSITE-ProRule" id="PRU00119"/>
    </source>
</evidence>
<evidence type="ECO:0000303" key="4">
    <source ref="1"/>
</evidence>
<evidence type="ECO:0000305" key="5"/>
<feature type="chain" id="PRO_0000394145" description="Zinc finger protein 534">
    <location>
        <begin position="1"/>
        <end position="674"/>
    </location>
</feature>
<feature type="domain" description="KRAB" evidence="3">
    <location>
        <begin position="8"/>
        <end position="92"/>
    </location>
</feature>
<feature type="zinc finger region" description="C2H2-type 1; degenerate" evidence="2">
    <location>
        <begin position="199"/>
        <end position="221"/>
    </location>
</feature>
<feature type="zinc finger region" description="C2H2-type 2" evidence="2">
    <location>
        <begin position="227"/>
        <end position="249"/>
    </location>
</feature>
<feature type="zinc finger region" description="C2H2-type 3; degenerate" evidence="2">
    <location>
        <begin position="255"/>
        <end position="277"/>
    </location>
</feature>
<feature type="zinc finger region" description="C2H2-type 4; degenerate" evidence="2">
    <location>
        <begin position="283"/>
        <end position="305"/>
    </location>
</feature>
<feature type="zinc finger region" description="C2H2-type 5" evidence="2">
    <location>
        <begin position="311"/>
        <end position="333"/>
    </location>
</feature>
<feature type="zinc finger region" description="C2H2-type 6" evidence="2">
    <location>
        <begin position="339"/>
        <end position="361"/>
    </location>
</feature>
<feature type="zinc finger region" description="C2H2-type 7" evidence="2">
    <location>
        <begin position="367"/>
        <end position="389"/>
    </location>
</feature>
<feature type="zinc finger region" description="C2H2-type 8" evidence="2">
    <location>
        <begin position="395"/>
        <end position="417"/>
    </location>
</feature>
<feature type="zinc finger region" description="C2H2-type 9" evidence="2">
    <location>
        <begin position="423"/>
        <end position="445"/>
    </location>
</feature>
<feature type="zinc finger region" description="C2H2-type 10" evidence="2">
    <location>
        <begin position="451"/>
        <end position="473"/>
    </location>
</feature>
<feature type="zinc finger region" description="C2H2-type 11" evidence="2">
    <location>
        <begin position="479"/>
        <end position="501"/>
    </location>
</feature>
<feature type="zinc finger region" description="C2H2-type 12" evidence="2">
    <location>
        <begin position="507"/>
        <end position="529"/>
    </location>
</feature>
<feature type="zinc finger region" description="C2H2-type 13" evidence="2">
    <location>
        <begin position="535"/>
        <end position="557"/>
    </location>
</feature>
<feature type="zinc finger region" description="C2H2-type 14" evidence="2">
    <location>
        <begin position="563"/>
        <end position="585"/>
    </location>
</feature>
<feature type="zinc finger region" description="C2H2-type 15" evidence="2">
    <location>
        <begin position="591"/>
        <end position="613"/>
    </location>
</feature>
<feature type="zinc finger region" description="C2H2-type 16" evidence="2">
    <location>
        <begin position="619"/>
        <end position="641"/>
    </location>
</feature>
<feature type="zinc finger region" description="C2H2-type 17" evidence="2">
    <location>
        <begin position="647"/>
        <end position="669"/>
    </location>
</feature>
<feature type="splice variant" id="VSP_039177" description="In isoform 2." evidence="4">
    <location>
        <begin position="48"/>
        <end position="60"/>
    </location>
</feature>
<comment type="function">
    <text evidence="1">May be involved in transcriptional regulation.</text>
</comment>
<comment type="interaction">
    <interactant intactId="EBI-17208605">
        <id>Q76KX8</id>
    </interactant>
    <interactant intactId="EBI-7159788">
        <id>Q9UPQ3</id>
        <label>AGAP1</label>
    </interactant>
    <organismsDiffer>false</organismsDiffer>
    <experiments>3</experiments>
</comment>
<comment type="interaction">
    <interactant intactId="EBI-17208605">
        <id>Q76KX8</id>
    </interactant>
    <interactant intactId="EBI-1220222">
        <id>P02747</id>
        <label>C1QC</label>
    </interactant>
    <organismsDiffer>false</organismsDiffer>
    <experiments>3</experiments>
</comment>
<comment type="interaction">
    <interactant intactId="EBI-17208605">
        <id>Q76KX8</id>
    </interactant>
    <interactant intactId="EBI-6309120">
        <id>Q9Y284</id>
        <label>WDR83OS</label>
    </interactant>
    <organismsDiffer>false</organismsDiffer>
    <experiments>3</experiments>
</comment>
<comment type="subcellular location">
    <subcellularLocation>
        <location evidence="5">Nucleus</location>
    </subcellularLocation>
</comment>
<comment type="alternative products">
    <event type="alternative splicing"/>
    <isoform>
        <id>Q76KX8-1</id>
        <name>1</name>
        <sequence type="displayed"/>
    </isoform>
    <isoform>
        <id>Q76KX8-2</id>
        <name>2</name>
        <sequence type="described" ref="VSP_039177"/>
    </isoform>
</comment>
<comment type="similarity">
    <text evidence="5">Belongs to the krueppel C2H2-type zinc-finger protein family.</text>
</comment>